<organism>
    <name type="scientific">Leptospira interrogans</name>
    <dbReference type="NCBI Taxonomy" id="173"/>
    <lineage>
        <taxon>Bacteria</taxon>
        <taxon>Pseudomonadati</taxon>
        <taxon>Spirochaetota</taxon>
        <taxon>Spirochaetia</taxon>
        <taxon>Leptospirales</taxon>
        <taxon>Leptospiraceae</taxon>
        <taxon>Leptospira</taxon>
    </lineage>
</organism>
<reference key="1">
    <citation type="journal article" date="1990" name="Infect. Immun.">
        <title>Molecular analysis of a sphingomyelinase C gene from Leptospira interrogans serovar hardjo.</title>
        <authorList>
            <person name="Segers R.P.A.M."/>
            <person name="van der Drift A."/>
            <person name="de Nijs A."/>
            <person name="Corcione P."/>
            <person name="van der Zeijst B.A.M."/>
            <person name="Gaastra W."/>
        </authorList>
    </citation>
    <scope>NUCLEOTIDE SEQUENCE [GENOMIC DNA]</scope>
    <source>
        <strain>Sponselee / Serogroup Sejroe / Serovar hardjo</strain>
    </source>
</reference>
<dbReference type="EMBL" id="X52176">
    <property type="protein sequence ID" value="CAA36425.1"/>
    <property type="molecule type" value="Genomic_DNA"/>
</dbReference>
<dbReference type="PIR" id="S22635">
    <property type="entry name" value="S22635"/>
</dbReference>
<name>YSP1_LEPIR</name>
<feature type="chain" id="PRO_0000066506" description="Uncharacterized 35 kDa protein in sph 3'region">
    <location>
        <begin position="1"/>
        <end position="303"/>
    </location>
</feature>
<proteinExistence type="predicted"/>
<protein>
    <recommendedName>
        <fullName>Uncharacterized 35 kDa protein in sph 3'region</fullName>
    </recommendedName>
    <alternativeName>
        <fullName>ORF 1</fullName>
    </alternativeName>
</protein>
<accession>P17628</accession>
<sequence>MEIFCICLLLDPIWIFGDTLILKDGRKMGNVRTSLREDHVLVEDETGKVEKIDLTLVEKILVSEIKKPEGEEKQKEHNNIKKFYFSWNLSSWSTKVTEKMNFNRGYNITDLITGVIYIDPYIEKRYTVNTKTTSFNGEYRYNLNLSFLFGIELNSYSFPDRKISPLVGILMNSNFNSTPEYQTLSSISINLFLFEGNFNFDKQGNDKFGIETLSLLPGMKYYFPLSESIFWFTQVGLGVGKSIESGVHSKVQTVLFVGTGIQWELESYFFNIALQYRKTDLIGATQSYHFNEPIFMIGGGLKL</sequence>